<gene>
    <name evidence="7" type="primary">Habp2</name>
</gene>
<sequence>MSVVMLVFRVLLLIALVGNSAIGLSLMPFIAPPDPDWTPDDYYYSYEQSSPDKDASVTQTSPENPDWYYEDDDPCQSNPCEHGGDCIIRGNTFSCSCPAPFSGSRCQTVQNKCKDNPCVQGDCLITQTPPYYRCACKYPYTGPDCSKVLPVCRPNPCQNGGVCSRHRRRSRFSCACPDQYKGRFCEIGPDDCYVGDGYSYRGKVSRTVNQNPCLYWNSHLLLQENYNMFMEDAETHGIADHNFCRNPDGDHKPWCFVKVNSEKVKWEYCNVEVCPESDAANPVGSLQEPVMELPGFDSCGKTEMTEHAVKRIYGGFKSTAGKHPWQVSLQTSLPLTTSMPQGHFCGGSLIHPCWVLTAAHCTDMSTKHLKVVLGDQDLKKTESHEQTFRVEKILKYSQYNERDEIPHNDIALLKLKPVGGHCALESKYVKTVCLPSDPFPSGTECHISGWGVTETGEGSRQLLDAKVKLIANALCNSRQLYDHTIDDSMICAGNLQKPGSDTCQGDSGGPLTCEKDGTYYVYGIVSWGQECGKKPGVYTQVTKFLNWIKTTMHKEAGL</sequence>
<name>HABP2_RAT</name>
<proteinExistence type="evidence at transcript level"/>
<reference key="1">
    <citation type="submission" date="2004-04" db="EMBL/GenBank/DDBJ databases">
        <title>Molecular cloning and expression of rat PHBP.</title>
        <authorList>
            <person name="Shimizu S."/>
            <person name="Satou K."/>
        </authorList>
    </citation>
    <scope>NUCLEOTIDE SEQUENCE [MRNA]</scope>
</reference>
<keyword id="KW-0165">Cleavage on pair of basic residues</keyword>
<keyword id="KW-1015">Disulfide bond</keyword>
<keyword id="KW-0245">EGF-like domain</keyword>
<keyword id="KW-0378">Hydrolase</keyword>
<keyword id="KW-0420">Kringle</keyword>
<keyword id="KW-0645">Protease</keyword>
<keyword id="KW-1185">Reference proteome</keyword>
<keyword id="KW-0677">Repeat</keyword>
<keyword id="KW-0964">Secreted</keyword>
<keyword id="KW-0720">Serine protease</keyword>
<keyword id="KW-0732">Signal</keyword>
<protein>
    <recommendedName>
        <fullName evidence="2">Factor VII-activating protease</fullName>
        <shortName evidence="2">FSAP</shortName>
        <ecNumber evidence="2">3.4.21.-</ecNumber>
    </recommendedName>
    <alternativeName>
        <fullName evidence="2">Hepatocyte growth factor activator-like protein</fullName>
    </alternativeName>
    <alternativeName>
        <fullName>Hyaluronan-binding protein 2</fullName>
    </alternativeName>
    <alternativeName>
        <fullName evidence="6">Plasma hyaluronan-binding protein</fullName>
        <shortName evidence="6">PHBP</shortName>
    </alternativeName>
    <component>
        <recommendedName>
            <fullName evidence="2">Factor VII-activating protease 50 kDa N-terminal heavy chain</fullName>
        </recommendedName>
    </component>
    <component>
        <recommendedName>
            <fullName evidence="2">Factor VII-activating protease 50 kDa N-terminal heavy chain alternate form</fullName>
        </recommendedName>
    </component>
    <component>
        <recommendedName>
            <fullName evidence="2">Factor VII-activating protease 27 kDa C-terminal light chain</fullName>
        </recommendedName>
    </component>
    <component>
        <recommendedName>
            <fullName evidence="2">Factor VII-activating protease 27 kDa C-terminal light chain alternate form</fullName>
        </recommendedName>
    </component>
</protein>
<dbReference type="EC" id="3.4.21.-" evidence="2"/>
<dbReference type="EMBL" id="AB177406">
    <property type="protein sequence ID" value="BAD19044.1"/>
    <property type="molecule type" value="mRNA"/>
</dbReference>
<dbReference type="RefSeq" id="NP_001001505.1">
    <property type="nucleotide sequence ID" value="NM_001001505.1"/>
</dbReference>
<dbReference type="SMR" id="Q6L711"/>
<dbReference type="FunCoup" id="Q6L711">
    <property type="interactions" value="50"/>
</dbReference>
<dbReference type="STRING" id="10116.ENSRNOP00000045891"/>
<dbReference type="MEROPS" id="S01.033"/>
<dbReference type="PhosphoSitePlus" id="Q6L711"/>
<dbReference type="PaxDb" id="10116-ENSRNOP00000045891"/>
<dbReference type="GeneID" id="292126"/>
<dbReference type="KEGG" id="rno:292126"/>
<dbReference type="UCSC" id="RGD:1302979">
    <property type="organism name" value="rat"/>
</dbReference>
<dbReference type="AGR" id="RGD:1302979"/>
<dbReference type="CTD" id="3026"/>
<dbReference type="RGD" id="1302979">
    <property type="gene designation" value="Habp2"/>
</dbReference>
<dbReference type="eggNOG" id="KOG1217">
    <property type="taxonomic scope" value="Eukaryota"/>
</dbReference>
<dbReference type="eggNOG" id="KOG3627">
    <property type="taxonomic scope" value="Eukaryota"/>
</dbReference>
<dbReference type="InParanoid" id="Q6L711"/>
<dbReference type="PhylomeDB" id="Q6L711"/>
<dbReference type="PRO" id="PR:Q6L711"/>
<dbReference type="Proteomes" id="UP000002494">
    <property type="component" value="Unplaced"/>
</dbReference>
<dbReference type="GO" id="GO:0005615">
    <property type="term" value="C:extracellular space"/>
    <property type="evidence" value="ECO:0000318"/>
    <property type="project" value="GO_Central"/>
</dbReference>
<dbReference type="GO" id="GO:0005509">
    <property type="term" value="F:calcium ion binding"/>
    <property type="evidence" value="ECO:0007669"/>
    <property type="project" value="InterPro"/>
</dbReference>
<dbReference type="GO" id="GO:0008233">
    <property type="term" value="F:peptidase activity"/>
    <property type="evidence" value="ECO:0000266"/>
    <property type="project" value="RGD"/>
</dbReference>
<dbReference type="GO" id="GO:0004252">
    <property type="term" value="F:serine-type endopeptidase activity"/>
    <property type="evidence" value="ECO:0000318"/>
    <property type="project" value="GO_Central"/>
</dbReference>
<dbReference type="GO" id="GO:0006508">
    <property type="term" value="P:proteolysis"/>
    <property type="evidence" value="ECO:0000266"/>
    <property type="project" value="RGD"/>
</dbReference>
<dbReference type="GO" id="GO:1904975">
    <property type="term" value="P:response to bleomycin"/>
    <property type="evidence" value="ECO:0000270"/>
    <property type="project" value="RGD"/>
</dbReference>
<dbReference type="CDD" id="cd00054">
    <property type="entry name" value="EGF_CA"/>
    <property type="match status" value="1"/>
</dbReference>
<dbReference type="CDD" id="cd00108">
    <property type="entry name" value="KR"/>
    <property type="match status" value="1"/>
</dbReference>
<dbReference type="CDD" id="cd00190">
    <property type="entry name" value="Tryp_SPc"/>
    <property type="match status" value="1"/>
</dbReference>
<dbReference type="FunFam" id="2.10.25.10:FF:000571">
    <property type="entry name" value="Hyaluronan-binding protein 2"/>
    <property type="match status" value="1"/>
</dbReference>
<dbReference type="FunFam" id="2.40.10.10:FF:000069">
    <property type="entry name" value="Hyaluronan-binding protein 2"/>
    <property type="match status" value="1"/>
</dbReference>
<dbReference type="FunFam" id="2.10.25.10:FF:000463">
    <property type="entry name" value="hyaluronan-binding protein 2"/>
    <property type="match status" value="1"/>
</dbReference>
<dbReference type="FunFam" id="2.40.20.10:FF:000001">
    <property type="entry name" value="Urokinase-type plasminogen activator"/>
    <property type="match status" value="1"/>
</dbReference>
<dbReference type="Gene3D" id="2.10.25.10">
    <property type="entry name" value="Laminin"/>
    <property type="match status" value="3"/>
</dbReference>
<dbReference type="Gene3D" id="2.40.20.10">
    <property type="entry name" value="Plasminogen Kringle 4"/>
    <property type="match status" value="1"/>
</dbReference>
<dbReference type="Gene3D" id="2.40.10.10">
    <property type="entry name" value="Trypsin-like serine proteases"/>
    <property type="match status" value="1"/>
</dbReference>
<dbReference type="InterPro" id="IPR001881">
    <property type="entry name" value="EGF-like_Ca-bd_dom"/>
</dbReference>
<dbReference type="InterPro" id="IPR000742">
    <property type="entry name" value="EGF-like_dom"/>
</dbReference>
<dbReference type="InterPro" id="IPR000001">
    <property type="entry name" value="Kringle"/>
</dbReference>
<dbReference type="InterPro" id="IPR013806">
    <property type="entry name" value="Kringle-like"/>
</dbReference>
<dbReference type="InterPro" id="IPR018056">
    <property type="entry name" value="Kringle_CS"/>
</dbReference>
<dbReference type="InterPro" id="IPR038178">
    <property type="entry name" value="Kringle_sf"/>
</dbReference>
<dbReference type="InterPro" id="IPR009003">
    <property type="entry name" value="Peptidase_S1_PA"/>
</dbReference>
<dbReference type="InterPro" id="IPR043504">
    <property type="entry name" value="Peptidase_S1_PA_chymotrypsin"/>
</dbReference>
<dbReference type="InterPro" id="IPR001314">
    <property type="entry name" value="Peptidase_S1A"/>
</dbReference>
<dbReference type="InterPro" id="IPR050127">
    <property type="entry name" value="Serine_Proteases_S1"/>
</dbReference>
<dbReference type="InterPro" id="IPR001254">
    <property type="entry name" value="Trypsin_dom"/>
</dbReference>
<dbReference type="InterPro" id="IPR018114">
    <property type="entry name" value="TRYPSIN_HIS"/>
</dbReference>
<dbReference type="InterPro" id="IPR033116">
    <property type="entry name" value="TRYPSIN_SER"/>
</dbReference>
<dbReference type="PANTHER" id="PTHR24264:SF40">
    <property type="entry name" value="HYALURONAN-BINDING PROTEIN 2"/>
    <property type="match status" value="1"/>
</dbReference>
<dbReference type="PANTHER" id="PTHR24264">
    <property type="entry name" value="TRYPSIN-RELATED"/>
    <property type="match status" value="1"/>
</dbReference>
<dbReference type="Pfam" id="PF00008">
    <property type="entry name" value="EGF"/>
    <property type="match status" value="2"/>
</dbReference>
<dbReference type="Pfam" id="PF00051">
    <property type="entry name" value="Kringle"/>
    <property type="match status" value="1"/>
</dbReference>
<dbReference type="Pfam" id="PF00089">
    <property type="entry name" value="Trypsin"/>
    <property type="match status" value="1"/>
</dbReference>
<dbReference type="PRINTS" id="PR00722">
    <property type="entry name" value="CHYMOTRYPSIN"/>
</dbReference>
<dbReference type="PRINTS" id="PR00018">
    <property type="entry name" value="KRINGLE"/>
</dbReference>
<dbReference type="SMART" id="SM00181">
    <property type="entry name" value="EGF"/>
    <property type="match status" value="3"/>
</dbReference>
<dbReference type="SMART" id="SM00179">
    <property type="entry name" value="EGF_CA"/>
    <property type="match status" value="2"/>
</dbReference>
<dbReference type="SMART" id="SM00130">
    <property type="entry name" value="KR"/>
    <property type="match status" value="1"/>
</dbReference>
<dbReference type="SMART" id="SM00020">
    <property type="entry name" value="Tryp_SPc"/>
    <property type="match status" value="1"/>
</dbReference>
<dbReference type="SUPFAM" id="SSF57196">
    <property type="entry name" value="EGF/Laminin"/>
    <property type="match status" value="2"/>
</dbReference>
<dbReference type="SUPFAM" id="SSF57440">
    <property type="entry name" value="Kringle-like"/>
    <property type="match status" value="1"/>
</dbReference>
<dbReference type="SUPFAM" id="SSF50494">
    <property type="entry name" value="Trypsin-like serine proteases"/>
    <property type="match status" value="1"/>
</dbReference>
<dbReference type="PROSITE" id="PS00022">
    <property type="entry name" value="EGF_1"/>
    <property type="match status" value="3"/>
</dbReference>
<dbReference type="PROSITE" id="PS01186">
    <property type="entry name" value="EGF_2"/>
    <property type="match status" value="2"/>
</dbReference>
<dbReference type="PROSITE" id="PS50026">
    <property type="entry name" value="EGF_3"/>
    <property type="match status" value="3"/>
</dbReference>
<dbReference type="PROSITE" id="PS00021">
    <property type="entry name" value="KRINGLE_1"/>
    <property type="match status" value="1"/>
</dbReference>
<dbReference type="PROSITE" id="PS50070">
    <property type="entry name" value="KRINGLE_2"/>
    <property type="match status" value="1"/>
</dbReference>
<dbReference type="PROSITE" id="PS50240">
    <property type="entry name" value="TRYPSIN_DOM"/>
    <property type="match status" value="1"/>
</dbReference>
<dbReference type="PROSITE" id="PS00134">
    <property type="entry name" value="TRYPSIN_HIS"/>
    <property type="match status" value="1"/>
</dbReference>
<dbReference type="PROSITE" id="PS00135">
    <property type="entry name" value="TRYPSIN_SER"/>
    <property type="match status" value="1"/>
</dbReference>
<evidence type="ECO:0000250" key="1">
    <source>
        <dbReference type="UniProtKB" id="Q04756"/>
    </source>
</evidence>
<evidence type="ECO:0000250" key="2">
    <source>
        <dbReference type="UniProtKB" id="Q14520"/>
    </source>
</evidence>
<evidence type="ECO:0000255" key="3">
    <source>
        <dbReference type="PROSITE-ProRule" id="PRU00076"/>
    </source>
</evidence>
<evidence type="ECO:0000255" key="4">
    <source>
        <dbReference type="PROSITE-ProRule" id="PRU00121"/>
    </source>
</evidence>
<evidence type="ECO:0000255" key="5">
    <source>
        <dbReference type="PROSITE-ProRule" id="PRU00274"/>
    </source>
</evidence>
<evidence type="ECO:0000303" key="6">
    <source ref="1"/>
</evidence>
<evidence type="ECO:0000312" key="7">
    <source>
        <dbReference type="RGD" id="1302979"/>
    </source>
</evidence>
<organism>
    <name type="scientific">Rattus norvegicus</name>
    <name type="common">Rat</name>
    <dbReference type="NCBI Taxonomy" id="10116"/>
    <lineage>
        <taxon>Eukaryota</taxon>
        <taxon>Metazoa</taxon>
        <taxon>Chordata</taxon>
        <taxon>Craniata</taxon>
        <taxon>Vertebrata</taxon>
        <taxon>Euteleostomi</taxon>
        <taxon>Mammalia</taxon>
        <taxon>Eutheria</taxon>
        <taxon>Euarchontoglires</taxon>
        <taxon>Glires</taxon>
        <taxon>Rodentia</taxon>
        <taxon>Myomorpha</taxon>
        <taxon>Muroidea</taxon>
        <taxon>Muridae</taxon>
        <taxon>Murinae</taxon>
        <taxon>Rattus</taxon>
    </lineage>
</organism>
<feature type="signal peptide" evidence="2">
    <location>
        <begin position="1"/>
        <end position="23"/>
    </location>
</feature>
<feature type="chain" id="PRO_0000027907" description="Factor VII-activating protease 50 kDa N-terminal heavy chain" evidence="2">
    <location>
        <begin position="24"/>
        <end position="311"/>
    </location>
</feature>
<feature type="chain" id="PRO_0000027908" description="Factor VII-activating protease 50 kDa N-terminal heavy chain alternate form" evidence="2">
    <location>
        <begin position="28"/>
        <end position="311"/>
    </location>
</feature>
<feature type="chain" id="PRO_0000027909" description="Factor VII-activating protease 27 kDa C-terminal light chain" evidence="2">
    <location>
        <begin position="312"/>
        <end position="558"/>
    </location>
</feature>
<feature type="chain" id="PRO_0000027910" description="Factor VII-activating protease 27 kDa C-terminal light chain alternate form" evidence="2">
    <location>
        <begin position="318"/>
        <end position="558"/>
    </location>
</feature>
<feature type="domain" description="EGF-like 1" evidence="3">
    <location>
        <begin position="71"/>
        <end position="107"/>
    </location>
</feature>
<feature type="domain" description="EGF-like 2" evidence="3">
    <location>
        <begin position="109"/>
        <end position="146"/>
    </location>
</feature>
<feature type="domain" description="EGF-like 3" evidence="3">
    <location>
        <begin position="148"/>
        <end position="186"/>
    </location>
</feature>
<feature type="domain" description="Kringle" evidence="4">
    <location>
        <begin position="191"/>
        <end position="274"/>
    </location>
</feature>
<feature type="domain" description="Peptidase S1" evidence="5">
    <location>
        <begin position="312"/>
        <end position="553"/>
    </location>
</feature>
<feature type="active site" description="Charge relay system" evidence="1 5">
    <location>
        <position position="360"/>
    </location>
</feature>
<feature type="active site" description="Charge relay system" evidence="1 5">
    <location>
        <position position="409"/>
    </location>
</feature>
<feature type="active site" description="Charge relay system" evidence="1 5">
    <location>
        <position position="507"/>
    </location>
</feature>
<feature type="site" description="Cleavage" evidence="2">
    <location>
        <begin position="478"/>
        <end position="479"/>
    </location>
</feature>
<feature type="disulfide bond" evidence="3">
    <location>
        <begin position="75"/>
        <end position="86"/>
    </location>
</feature>
<feature type="disulfide bond" evidence="3">
    <location>
        <begin position="80"/>
        <end position="95"/>
    </location>
</feature>
<feature type="disulfide bond" evidence="3">
    <location>
        <begin position="97"/>
        <end position="106"/>
    </location>
</feature>
<feature type="disulfide bond" evidence="3">
    <location>
        <begin position="113"/>
        <end position="123"/>
    </location>
</feature>
<feature type="disulfide bond" evidence="3">
    <location>
        <begin position="118"/>
        <end position="134"/>
    </location>
</feature>
<feature type="disulfide bond" evidence="3">
    <location>
        <begin position="136"/>
        <end position="145"/>
    </location>
</feature>
<feature type="disulfide bond" evidence="3">
    <location>
        <begin position="152"/>
        <end position="163"/>
    </location>
</feature>
<feature type="disulfide bond" evidence="3">
    <location>
        <begin position="157"/>
        <end position="174"/>
    </location>
</feature>
<feature type="disulfide bond" evidence="3">
    <location>
        <begin position="176"/>
        <end position="185"/>
    </location>
</feature>
<feature type="disulfide bond" evidence="4">
    <location>
        <begin position="192"/>
        <end position="274"/>
    </location>
</feature>
<feature type="disulfide bond" evidence="4">
    <location>
        <begin position="213"/>
        <end position="255"/>
    </location>
</feature>
<feature type="disulfide bond" evidence="4">
    <location>
        <begin position="244"/>
        <end position="269"/>
    </location>
</feature>
<feature type="disulfide bond" evidence="1">
    <location>
        <begin position="299"/>
        <end position="433"/>
    </location>
</feature>
<feature type="disulfide bond" description="Interchain (with C-521)" evidence="1">
    <location>
        <position position="299"/>
    </location>
</feature>
<feature type="disulfide bond" evidence="1 5">
    <location>
        <begin position="345"/>
        <end position="361"/>
    </location>
</feature>
<feature type="disulfide bond" evidence="1">
    <location>
        <begin position="353"/>
        <end position="422"/>
    </location>
</feature>
<feature type="disulfide bond" description="Interchain (with C-394)" evidence="1">
    <location>
        <position position="433"/>
    </location>
</feature>
<feature type="disulfide bond" evidence="1 5">
    <location>
        <begin position="445"/>
        <end position="513"/>
    </location>
</feature>
<feature type="disulfide bond" evidence="1 5">
    <location>
        <begin position="475"/>
        <end position="491"/>
    </location>
</feature>
<feature type="disulfide bond" evidence="1 5">
    <location>
        <begin position="503"/>
        <end position="531"/>
    </location>
</feature>
<accession>Q6L711</accession>
<comment type="function">
    <text evidence="2">Cleaves the alpha-chain at multiple sites and the beta-chain between 'Lys-53' and 'Lys-54' but not the gamma-chain of fibrinogen and therefore does not initiate the formation of the fibrin clot and does not cause the fibrinolysis directly. It does not cleave (activate) prothrombin and plasminogen but converts the inactive single chain urinary plasminogen activator (pro-urokinase) to the active two chain form. Activates coagulation factor VII. May function as a tumor suppressor negatively regulating cell proliferation and cell migration.</text>
</comment>
<comment type="subunit">
    <text evidence="2">Heterodimer; disulfide-linked. Heterodimer of a 50 kDa heavy and a 27 kDa light chain linked by a disulfide bond.</text>
</comment>
<comment type="subcellular location">
    <subcellularLocation>
        <location evidence="2">Secreted</location>
    </subcellularLocation>
    <text evidence="2">Secreted as an inactive single-chain precursor and is then activated to a heterodimeric form.</text>
</comment>
<comment type="PTM">
    <text evidence="2">Proteolytic cleavage at Gly-23 or Met-27 can give rise to the 50 kDa heavy chain (HC) and cleavage at Arg-311 or Lys-317 can give rise to the 27 kDa light chain (LC). The HC can undergo further proteolytic cleavage giving rise to a 26 kDa fragment. The LC can undergo further proteolytic cleavage at Arg-311 leading to a 17-kDa fragment and at Arg-478 leading to a 8-kDa fragment.</text>
</comment>
<comment type="similarity">
    <text evidence="5">Belongs to the peptidase S1 family.</text>
</comment>